<dbReference type="EMBL" id="CP000023">
    <property type="protein sequence ID" value="AAV60555.1"/>
    <property type="molecule type" value="Genomic_DNA"/>
</dbReference>
<dbReference type="RefSeq" id="WP_002950594.1">
    <property type="nucleotide sequence ID" value="NC_006448.1"/>
</dbReference>
<dbReference type="SMR" id="Q5M4P2"/>
<dbReference type="STRING" id="264199.stu0888"/>
<dbReference type="KEGG" id="stl:stu0888"/>
<dbReference type="eggNOG" id="COG2739">
    <property type="taxonomic scope" value="Bacteria"/>
</dbReference>
<dbReference type="HOGENOM" id="CLU_129218_1_0_9"/>
<dbReference type="Proteomes" id="UP000001170">
    <property type="component" value="Chromosome"/>
</dbReference>
<dbReference type="Gene3D" id="1.10.10.10">
    <property type="entry name" value="Winged helix-like DNA-binding domain superfamily/Winged helix DNA-binding domain"/>
    <property type="match status" value="1"/>
</dbReference>
<dbReference type="HAMAP" id="MF_00245">
    <property type="entry name" value="UPF0122"/>
    <property type="match status" value="1"/>
</dbReference>
<dbReference type="InterPro" id="IPR013324">
    <property type="entry name" value="RNA_pol_sigma_r3/r4-like"/>
</dbReference>
<dbReference type="InterPro" id="IPR007394">
    <property type="entry name" value="UPF0122"/>
</dbReference>
<dbReference type="InterPro" id="IPR054831">
    <property type="entry name" value="UPF0122_fam_protein"/>
</dbReference>
<dbReference type="InterPro" id="IPR036388">
    <property type="entry name" value="WH-like_DNA-bd_sf"/>
</dbReference>
<dbReference type="NCBIfam" id="NF001066">
    <property type="entry name" value="PRK00118.1-1"/>
    <property type="match status" value="1"/>
</dbReference>
<dbReference type="NCBIfam" id="NF001068">
    <property type="entry name" value="PRK00118.1-4"/>
    <property type="match status" value="1"/>
</dbReference>
<dbReference type="NCBIfam" id="NF001070">
    <property type="entry name" value="PRK00118.1-6"/>
    <property type="match status" value="1"/>
</dbReference>
<dbReference type="NCBIfam" id="NF045758">
    <property type="entry name" value="YlxM"/>
    <property type="match status" value="1"/>
</dbReference>
<dbReference type="PANTHER" id="PTHR40083">
    <property type="entry name" value="UPF0122 PROTEIN CBO2450/CLC_2298"/>
    <property type="match status" value="1"/>
</dbReference>
<dbReference type="PANTHER" id="PTHR40083:SF1">
    <property type="entry name" value="UPF0122 PROTEIN YLXM"/>
    <property type="match status" value="1"/>
</dbReference>
<dbReference type="Pfam" id="PF04297">
    <property type="entry name" value="UPF0122"/>
    <property type="match status" value="1"/>
</dbReference>
<dbReference type="SUPFAM" id="SSF88659">
    <property type="entry name" value="Sigma3 and sigma4 domains of RNA polymerase sigma factors"/>
    <property type="match status" value="1"/>
</dbReference>
<comment type="function">
    <text evidence="1">Might take part in the signal recognition particle (SRP) pathway. This is inferred from the conservation of its genetic proximity to ftsY/ffh. May be a regulatory protein.</text>
</comment>
<comment type="similarity">
    <text evidence="1">Belongs to the UPF0122 family.</text>
</comment>
<proteinExistence type="inferred from homology"/>
<reference key="1">
    <citation type="journal article" date="2004" name="Nat. Biotechnol.">
        <title>Complete sequence and comparative genome analysis of the dairy bacterium Streptococcus thermophilus.</title>
        <authorList>
            <person name="Bolotin A."/>
            <person name="Quinquis B."/>
            <person name="Renault P."/>
            <person name="Sorokin A."/>
            <person name="Ehrlich S.D."/>
            <person name="Kulakauskas S."/>
            <person name="Lapidus A."/>
            <person name="Goltsman E."/>
            <person name="Mazur M."/>
            <person name="Pusch G.D."/>
            <person name="Fonstein M."/>
            <person name="Overbeek R."/>
            <person name="Kyprides N."/>
            <person name="Purnelle B."/>
            <person name="Prozzi D."/>
            <person name="Ngui K."/>
            <person name="Masuy D."/>
            <person name="Hancy F."/>
            <person name="Burteau S."/>
            <person name="Boutry M."/>
            <person name="Delcour J."/>
            <person name="Goffeau A."/>
            <person name="Hols P."/>
        </authorList>
    </citation>
    <scope>NUCLEOTIDE SEQUENCE [LARGE SCALE GENOMIC DNA]</scope>
    <source>
        <strain>ATCC BAA-250 / LMG 18311</strain>
    </source>
</reference>
<accession>Q5M4P2</accession>
<evidence type="ECO:0000255" key="1">
    <source>
        <dbReference type="HAMAP-Rule" id="MF_00245"/>
    </source>
</evidence>
<sequence>MEIEKTNRMNALFEFYAALLTDKQMNYIELYYADDYSLAEIAEEFGVSRQAVYDNIKRTEKILEDYEMKLHMYSDYIVRSQIFDDIMEKYADDSYLQEQIAILSSIDNRD</sequence>
<gene>
    <name type="ordered locus">stu0888</name>
</gene>
<protein>
    <recommendedName>
        <fullName evidence="1">UPF0122 protein stu0888</fullName>
    </recommendedName>
</protein>
<feature type="chain" id="PRO_1000012553" description="UPF0122 protein stu0888">
    <location>
        <begin position="1"/>
        <end position="110"/>
    </location>
</feature>
<organism>
    <name type="scientific">Streptococcus thermophilus (strain ATCC BAA-250 / LMG 18311)</name>
    <dbReference type="NCBI Taxonomy" id="264199"/>
    <lineage>
        <taxon>Bacteria</taxon>
        <taxon>Bacillati</taxon>
        <taxon>Bacillota</taxon>
        <taxon>Bacilli</taxon>
        <taxon>Lactobacillales</taxon>
        <taxon>Streptococcaceae</taxon>
        <taxon>Streptococcus</taxon>
    </lineage>
</organism>
<keyword id="KW-1185">Reference proteome</keyword>
<name>Y888_STRT2</name>